<organism>
    <name type="scientific">Gallus gallus</name>
    <name type="common">Chicken</name>
    <dbReference type="NCBI Taxonomy" id="9031"/>
    <lineage>
        <taxon>Eukaryota</taxon>
        <taxon>Metazoa</taxon>
        <taxon>Chordata</taxon>
        <taxon>Craniata</taxon>
        <taxon>Vertebrata</taxon>
        <taxon>Euteleostomi</taxon>
        <taxon>Archelosauria</taxon>
        <taxon>Archosauria</taxon>
        <taxon>Dinosauria</taxon>
        <taxon>Saurischia</taxon>
        <taxon>Theropoda</taxon>
        <taxon>Coelurosauria</taxon>
        <taxon>Aves</taxon>
        <taxon>Neognathae</taxon>
        <taxon>Galloanserae</taxon>
        <taxon>Galliformes</taxon>
        <taxon>Phasianidae</taxon>
        <taxon>Phasianinae</taxon>
        <taxon>Gallus</taxon>
    </lineage>
</organism>
<keyword id="KW-0114">cAMP</keyword>
<keyword id="KW-0116">cAMP-binding</keyword>
<keyword id="KW-0407">Ion channel</keyword>
<keyword id="KW-0406">Ion transport</keyword>
<keyword id="KW-1071">Ligand-gated ion channel</keyword>
<keyword id="KW-0472">Membrane</keyword>
<keyword id="KW-0547">Nucleotide-binding</keyword>
<keyword id="KW-1185">Reference proteome</keyword>
<keyword id="KW-0716">Sensory transduction</keyword>
<keyword id="KW-0812">Transmembrane</keyword>
<keyword id="KW-1133">Transmembrane helix</keyword>
<keyword id="KW-0813">Transport</keyword>
<keyword id="KW-0844">Vision</keyword>
<accession>Q90805</accession>
<evidence type="ECO:0000250" key="1"/>
<evidence type="ECO:0000250" key="2">
    <source>
        <dbReference type="UniProtKB" id="P29973"/>
    </source>
</evidence>
<evidence type="ECO:0000255" key="3"/>
<evidence type="ECO:0000256" key="4">
    <source>
        <dbReference type="SAM" id="MobiDB-lite"/>
    </source>
</evidence>
<evidence type="ECO:0000305" key="5"/>
<reference key="1">
    <citation type="journal article" date="1993" name="Neuron">
        <title>Rod and cone photoreceptor cells express distinct genes for cGMP-gated channels.</title>
        <authorList>
            <person name="Boenigk W."/>
            <person name="Altenhofen W."/>
            <person name="Mueller F."/>
            <person name="Dose A."/>
            <person name="Illing M."/>
            <person name="Molday R.S."/>
            <person name="Kaupp U.B."/>
        </authorList>
    </citation>
    <scope>NUCLEOTIDE SEQUENCE [MRNA]</scope>
</reference>
<sequence>MAKINTQHSYPGMHGLSVRTTDEDIERIENGFIRTHSLCEDTSSELQRVISMEGRHLSGSQTSPFTGRGAMARLSRFVVSLRSWATRHLHHEDQRPDSFLERIRGPELVEVSSRQSNIRSFLGIREQPGGVNGPWPLARFNVNFSNNTNEDKKEEKKEVKEEKKEEKKEEKKEEKKDDKKDDKKDDKKDDKKKEEQKKEVFVIDPSSNMYYNWLTIIAAPVFYNWCMLICRACFDELQIDHIKLWLFLDYCSDIIYVFDMFVRFRTGFLEQGLLVKDEKKLRDHYTQTVQFKLDVLSLLPTDLAYLKLGLNYPELRFNRLLRIARLFEFFDRTETRTNYPNMFRIGNLVLYILIIIHWNACIYFAISKVIGFGTDSWVYPNVSIPEYGRLSRKYIYSLYWSTLTLTTIGETPPPVKDEEYLFVVIDFLVGVLIFATIVGNVGSMISNMNASRAEFQAKVDSIKQYMHFRKVTKDLEARVIKWFDYLWTNKKTVDEKEVLKNLPDKLKAEIAINVHLDTLKKVRIFQDCEAGLLIELVLKLKPTVFSPGDYICKKGDIGREMYIIKEGKLAVVADDGITQFVVLSDGSYFGEISILNIKGSKSGNRRTANIRSIGYSDLFCLSKDDLMEALTEYPEAKKALEEKGRQILMKDNLIDEEAAKAGADPKDLEEKIDRLETALDTLQTRFARLLAEYSSSQQKVKQRLARVETRVKKYGSGSLSVGEPEPEKPEEQKKD</sequence>
<feature type="chain" id="PRO_0000219324" description="Cyclic nucleotide-gated channel cone photoreceptor subunit alpha">
    <location>
        <begin position="1"/>
        <end position="735"/>
    </location>
</feature>
<feature type="topological domain" description="Cytoplasmic" evidence="5">
    <location>
        <begin position="1"/>
        <end position="214"/>
    </location>
</feature>
<feature type="transmembrane region" description="Helical; Name=S1" evidence="2">
    <location>
        <begin position="215"/>
        <end position="236"/>
    </location>
</feature>
<feature type="topological domain" description="Extracellular" evidence="5">
    <location>
        <begin position="237"/>
        <end position="246"/>
    </location>
</feature>
<feature type="transmembrane region" description="Helical; Name=S2" evidence="2">
    <location>
        <begin position="247"/>
        <end position="267"/>
    </location>
</feature>
<feature type="topological domain" description="Cytoplasmic" evidence="5">
    <location>
        <begin position="268"/>
        <end position="292"/>
    </location>
</feature>
<feature type="transmembrane region" description="Helical; Name=S3" evidence="2">
    <location>
        <begin position="293"/>
        <end position="311"/>
    </location>
</feature>
<feature type="topological domain" description="Extracellular" evidence="5">
    <location>
        <begin position="312"/>
        <end position="316"/>
    </location>
</feature>
<feature type="transmembrane region" description="Helical; Name=S4" evidence="2">
    <location>
        <begin position="317"/>
        <end position="335"/>
    </location>
</feature>
<feature type="topological domain" description="Cytoplasmic" evidence="5">
    <location>
        <begin position="336"/>
        <end position="342"/>
    </location>
</feature>
<feature type="transmembrane region" description="Helical; Name=S5" evidence="2">
    <location>
        <begin position="343"/>
        <end position="366"/>
    </location>
</feature>
<feature type="topological domain" description="Extracellular" evidence="5">
    <location>
        <begin position="367"/>
        <end position="389"/>
    </location>
</feature>
<feature type="transmembrane region" description="Helical; Name=P-helix" evidence="2">
    <location>
        <begin position="390"/>
        <end position="424"/>
    </location>
</feature>
<feature type="transmembrane region" description="Helical; Name=S6" evidence="2">
    <location>
        <begin position="425"/>
        <end position="449"/>
    </location>
</feature>
<feature type="topological domain" description="Cytoplasmic" evidence="5">
    <location>
        <begin position="450"/>
        <end position="735"/>
    </location>
</feature>
<feature type="region of interest" description="Disordered" evidence="4">
    <location>
        <begin position="142"/>
        <end position="191"/>
    </location>
</feature>
<feature type="region of interest" description="Disordered" evidence="4">
    <location>
        <begin position="715"/>
        <end position="735"/>
    </location>
</feature>
<feature type="compositionally biased region" description="Basic and acidic residues" evidence="4">
    <location>
        <begin position="149"/>
        <end position="191"/>
    </location>
</feature>
<feature type="compositionally biased region" description="Basic and acidic residues" evidence="4">
    <location>
        <begin position="725"/>
        <end position="735"/>
    </location>
</feature>
<feature type="binding site" evidence="1">
    <location>
        <begin position="532"/>
        <end position="654"/>
    </location>
    <ligand>
        <name>3',5'-cyclic GMP</name>
        <dbReference type="ChEBI" id="CHEBI:57746"/>
    </ligand>
</feature>
<feature type="binding site" evidence="3">
    <location>
        <position position="591"/>
    </location>
    <ligand>
        <name>3',5'-cyclic GMP</name>
        <dbReference type="ChEBI" id="CHEBI:57746"/>
    </ligand>
</feature>
<feature type="binding site" evidence="3">
    <location>
        <position position="606"/>
    </location>
    <ligand>
        <name>3',5'-cyclic GMP</name>
        <dbReference type="ChEBI" id="CHEBI:57746"/>
    </ligand>
</feature>
<dbReference type="EMBL" id="X89598">
    <property type="protein sequence ID" value="CAA61757.1"/>
    <property type="molecule type" value="mRNA"/>
</dbReference>
<dbReference type="PIR" id="I50630">
    <property type="entry name" value="I50630"/>
</dbReference>
<dbReference type="RefSeq" id="NP_990552.1">
    <property type="nucleotide sequence ID" value="NM_205221.1"/>
</dbReference>
<dbReference type="SMR" id="Q90805"/>
<dbReference type="FunCoup" id="Q90805">
    <property type="interactions" value="1"/>
</dbReference>
<dbReference type="STRING" id="9031.ENSGALP00000051385"/>
<dbReference type="PaxDb" id="9031-ENSGALP00000041391"/>
<dbReference type="GeneID" id="396144"/>
<dbReference type="KEGG" id="gga:396144"/>
<dbReference type="CTD" id="1261"/>
<dbReference type="VEuPathDB" id="HostDB:geneid_396144"/>
<dbReference type="eggNOG" id="KOG0500">
    <property type="taxonomic scope" value="Eukaryota"/>
</dbReference>
<dbReference type="InParanoid" id="Q90805"/>
<dbReference type="OrthoDB" id="421226at2759"/>
<dbReference type="PhylomeDB" id="Q90805"/>
<dbReference type="PRO" id="PR:Q90805"/>
<dbReference type="Proteomes" id="UP000000539">
    <property type="component" value="Unassembled WGS sequence"/>
</dbReference>
<dbReference type="GO" id="GO:0017071">
    <property type="term" value="C:intracellular cyclic nucleotide activated cation channel complex"/>
    <property type="evidence" value="ECO:0000318"/>
    <property type="project" value="GO_Central"/>
</dbReference>
<dbReference type="GO" id="GO:0005886">
    <property type="term" value="C:plasma membrane"/>
    <property type="evidence" value="ECO:0000318"/>
    <property type="project" value="GO_Central"/>
</dbReference>
<dbReference type="GO" id="GO:0030552">
    <property type="term" value="F:cAMP binding"/>
    <property type="evidence" value="ECO:0007669"/>
    <property type="project" value="UniProtKB-KW"/>
</dbReference>
<dbReference type="GO" id="GO:0030553">
    <property type="term" value="F:cGMP binding"/>
    <property type="evidence" value="ECO:0000318"/>
    <property type="project" value="GO_Central"/>
</dbReference>
<dbReference type="GO" id="GO:0005222">
    <property type="term" value="F:intracellularly cAMP-activated cation channel activity"/>
    <property type="evidence" value="ECO:0000318"/>
    <property type="project" value="GO_Central"/>
</dbReference>
<dbReference type="GO" id="GO:0005223">
    <property type="term" value="F:intracellularly cGMP-activated cation channel activity"/>
    <property type="evidence" value="ECO:0000318"/>
    <property type="project" value="GO_Central"/>
</dbReference>
<dbReference type="GO" id="GO:0044877">
    <property type="term" value="F:protein-containing complex binding"/>
    <property type="evidence" value="ECO:0000318"/>
    <property type="project" value="GO_Central"/>
</dbReference>
<dbReference type="GO" id="GO:0098655">
    <property type="term" value="P:monoatomic cation transmembrane transport"/>
    <property type="evidence" value="ECO:0000318"/>
    <property type="project" value="GO_Central"/>
</dbReference>
<dbReference type="GO" id="GO:0007601">
    <property type="term" value="P:visual perception"/>
    <property type="evidence" value="ECO:0007669"/>
    <property type="project" value="UniProtKB-KW"/>
</dbReference>
<dbReference type="CDD" id="cd00038">
    <property type="entry name" value="CAP_ED"/>
    <property type="match status" value="1"/>
</dbReference>
<dbReference type="FunFam" id="2.60.120.10:FF:000002">
    <property type="entry name" value="Cyclic nucleotide gated channel alpha 1a"/>
    <property type="match status" value="1"/>
</dbReference>
<dbReference type="FunFam" id="1.10.287.630:FF:000001">
    <property type="entry name" value="Cyclic nucleotide-gated channel alpha 3"/>
    <property type="match status" value="1"/>
</dbReference>
<dbReference type="FunFam" id="1.10.287.70:FF:000030">
    <property type="entry name" value="Cyclic nucleotide-gated channel alpha 3"/>
    <property type="match status" value="1"/>
</dbReference>
<dbReference type="FunFam" id="1.20.5.300:FF:000002">
    <property type="entry name" value="Cyclic nucleotide-gated channel alpha 3"/>
    <property type="match status" value="1"/>
</dbReference>
<dbReference type="Gene3D" id="1.10.287.70">
    <property type="match status" value="1"/>
</dbReference>
<dbReference type="Gene3D" id="1.20.5.300">
    <property type="match status" value="1"/>
</dbReference>
<dbReference type="Gene3D" id="1.10.287.630">
    <property type="entry name" value="Helix hairpin bin"/>
    <property type="match status" value="1"/>
</dbReference>
<dbReference type="Gene3D" id="2.60.120.10">
    <property type="entry name" value="Jelly Rolls"/>
    <property type="match status" value="1"/>
</dbReference>
<dbReference type="InterPro" id="IPR032406">
    <property type="entry name" value="CLZ_dom"/>
</dbReference>
<dbReference type="InterPro" id="IPR050866">
    <property type="entry name" value="CNG_cation_channel"/>
</dbReference>
<dbReference type="InterPro" id="IPR018488">
    <property type="entry name" value="cNMP-bd_CS"/>
</dbReference>
<dbReference type="InterPro" id="IPR000595">
    <property type="entry name" value="cNMP-bd_dom"/>
</dbReference>
<dbReference type="InterPro" id="IPR018490">
    <property type="entry name" value="cNMP-bd_dom_sf"/>
</dbReference>
<dbReference type="InterPro" id="IPR005821">
    <property type="entry name" value="Ion_trans_dom"/>
</dbReference>
<dbReference type="InterPro" id="IPR014710">
    <property type="entry name" value="RmlC-like_jellyroll"/>
</dbReference>
<dbReference type="PANTHER" id="PTHR45638:SF6">
    <property type="entry name" value="CYCLIC NUCLEOTIDE-GATED CATION CHANNEL ALPHA-3"/>
    <property type="match status" value="1"/>
</dbReference>
<dbReference type="PANTHER" id="PTHR45638">
    <property type="entry name" value="CYCLIC NUCLEOTIDE-GATED CATION CHANNEL SUBUNIT A"/>
    <property type="match status" value="1"/>
</dbReference>
<dbReference type="Pfam" id="PF16526">
    <property type="entry name" value="CLZ"/>
    <property type="match status" value="1"/>
</dbReference>
<dbReference type="Pfam" id="PF00027">
    <property type="entry name" value="cNMP_binding"/>
    <property type="match status" value="1"/>
</dbReference>
<dbReference type="Pfam" id="PF00520">
    <property type="entry name" value="Ion_trans"/>
    <property type="match status" value="1"/>
</dbReference>
<dbReference type="SMART" id="SM00100">
    <property type="entry name" value="cNMP"/>
    <property type="match status" value="1"/>
</dbReference>
<dbReference type="SUPFAM" id="SSF51206">
    <property type="entry name" value="cAMP-binding domain-like"/>
    <property type="match status" value="1"/>
</dbReference>
<dbReference type="SUPFAM" id="SSF81324">
    <property type="entry name" value="Voltage-gated potassium channels"/>
    <property type="match status" value="1"/>
</dbReference>
<dbReference type="PROSITE" id="PS00888">
    <property type="entry name" value="CNMP_BINDING_1"/>
    <property type="match status" value="1"/>
</dbReference>
<dbReference type="PROSITE" id="PS00889">
    <property type="entry name" value="CNMP_BINDING_2"/>
    <property type="match status" value="1"/>
</dbReference>
<dbReference type="PROSITE" id="PS50042">
    <property type="entry name" value="CNMP_BINDING_3"/>
    <property type="match status" value="1"/>
</dbReference>
<name>CNG1_CHICK</name>
<proteinExistence type="evidence at transcript level"/>
<comment type="function">
    <text>Visual signal transduction is mediated by a G-protein coupled cascade using cGMP as second messenger. This protein can be activated by cyclic GMP which leads to an opening of the cation channel and thereby causing a depolarization of cone photoreceptors.</text>
</comment>
<comment type="subcellular location">
    <subcellularLocation>
        <location>Membrane</location>
        <topology>Multi-pass membrane protein</topology>
    </subcellularLocation>
</comment>
<comment type="similarity">
    <text evidence="5">Belongs to the cyclic nucleotide-gated cation channel (TC 1.A.1.5) family.</text>
</comment>
<protein>
    <recommendedName>
        <fullName>Cyclic nucleotide-gated channel cone photoreceptor subunit alpha</fullName>
    </recommendedName>
    <alternativeName>
        <fullName>CNG channel 1</fullName>
        <shortName>CNG-1</shortName>
        <shortName>CNG1</shortName>
    </alternativeName>
</protein>